<protein>
    <recommendedName>
        <fullName evidence="1">Oxygen-dependent coproporphyrinogen-III oxidase</fullName>
        <shortName evidence="1">CPO</shortName>
        <shortName evidence="1">Coprogen oxidase</shortName>
        <shortName evidence="1">Coproporphyrinogenase</shortName>
        <ecNumber evidence="1">1.3.3.3</ecNumber>
    </recommendedName>
</protein>
<proteinExistence type="inferred from homology"/>
<comment type="function">
    <text evidence="1">Involved in the heme biosynthesis. Catalyzes the aerobic oxidative decarboxylation of propionate groups of rings A and B of coproporphyrinogen-III to yield the vinyl groups in protoporphyrinogen-IX.</text>
</comment>
<comment type="catalytic activity">
    <reaction evidence="1">
        <text>coproporphyrinogen III + O2 + 2 H(+) = protoporphyrinogen IX + 2 CO2 + 2 H2O</text>
        <dbReference type="Rhea" id="RHEA:18257"/>
        <dbReference type="ChEBI" id="CHEBI:15377"/>
        <dbReference type="ChEBI" id="CHEBI:15378"/>
        <dbReference type="ChEBI" id="CHEBI:15379"/>
        <dbReference type="ChEBI" id="CHEBI:16526"/>
        <dbReference type="ChEBI" id="CHEBI:57307"/>
        <dbReference type="ChEBI" id="CHEBI:57309"/>
        <dbReference type="EC" id="1.3.3.3"/>
    </reaction>
</comment>
<comment type="cofactor">
    <cofactor evidence="1">
        <name>a divalent metal cation</name>
        <dbReference type="ChEBI" id="CHEBI:60240"/>
    </cofactor>
</comment>
<comment type="pathway">
    <text evidence="1">Porphyrin-containing compound metabolism; protoporphyrin-IX biosynthesis; protoporphyrinogen-IX from coproporphyrinogen-III (O2 route): step 1/1.</text>
</comment>
<comment type="subunit">
    <text evidence="1">Homodimer.</text>
</comment>
<comment type="subcellular location">
    <subcellularLocation>
        <location evidence="1">Cytoplasm</location>
    </subcellularLocation>
</comment>
<comment type="similarity">
    <text evidence="1">Belongs to the aerobic coproporphyrinogen-III oxidase family.</text>
</comment>
<feature type="chain" id="PRO_1000119826" description="Oxygen-dependent coproporphyrinogen-III oxidase">
    <location>
        <begin position="1"/>
        <end position="304"/>
    </location>
</feature>
<feature type="region of interest" description="Important for dimerization" evidence="1">
    <location>
        <begin position="242"/>
        <end position="277"/>
    </location>
</feature>
<feature type="active site" description="Proton donor" evidence="1">
    <location>
        <position position="108"/>
    </location>
</feature>
<feature type="binding site" evidence="1">
    <location>
        <position position="94"/>
    </location>
    <ligand>
        <name>substrate</name>
    </ligand>
</feature>
<feature type="binding site" evidence="1">
    <location>
        <position position="98"/>
    </location>
    <ligand>
        <name>a divalent metal cation</name>
        <dbReference type="ChEBI" id="CHEBI:60240"/>
    </ligand>
</feature>
<feature type="binding site" evidence="1">
    <location>
        <position position="108"/>
    </location>
    <ligand>
        <name>a divalent metal cation</name>
        <dbReference type="ChEBI" id="CHEBI:60240"/>
    </ligand>
</feature>
<feature type="binding site" evidence="1">
    <location>
        <begin position="110"/>
        <end position="112"/>
    </location>
    <ligand>
        <name>substrate</name>
    </ligand>
</feature>
<feature type="binding site" evidence="1">
    <location>
        <position position="147"/>
    </location>
    <ligand>
        <name>a divalent metal cation</name>
        <dbReference type="ChEBI" id="CHEBI:60240"/>
    </ligand>
</feature>
<feature type="binding site" evidence="1">
    <location>
        <position position="177"/>
    </location>
    <ligand>
        <name>a divalent metal cation</name>
        <dbReference type="ChEBI" id="CHEBI:60240"/>
    </ligand>
</feature>
<feature type="binding site" evidence="1">
    <location>
        <begin position="260"/>
        <end position="262"/>
    </location>
    <ligand>
        <name>substrate</name>
    </ligand>
</feature>
<feature type="site" description="Important for dimerization" evidence="1">
    <location>
        <position position="177"/>
    </location>
</feature>
<organism>
    <name type="scientific">Shewanella piezotolerans (strain WP3 / JCM 13877)</name>
    <dbReference type="NCBI Taxonomy" id="225849"/>
    <lineage>
        <taxon>Bacteria</taxon>
        <taxon>Pseudomonadati</taxon>
        <taxon>Pseudomonadota</taxon>
        <taxon>Gammaproteobacteria</taxon>
        <taxon>Alteromonadales</taxon>
        <taxon>Shewanellaceae</taxon>
        <taxon>Shewanella</taxon>
    </lineage>
</organism>
<keyword id="KW-0963">Cytoplasm</keyword>
<keyword id="KW-0350">Heme biosynthesis</keyword>
<keyword id="KW-0479">Metal-binding</keyword>
<keyword id="KW-0560">Oxidoreductase</keyword>
<keyword id="KW-0627">Porphyrin biosynthesis</keyword>
<accession>B8CHB9</accession>
<sequence length="304" mass="34496">MSIPDSSVVKAFLLELQNNICNGLEALDGVASFKEDSWKREEGGGGQSRVLTGGKVFEQAGVNFSHVMGASMPASATAHRPELAGRNFEAMGVSLVIHPNNPHIPTTHANVRFFIAHKEGTDPIWWFGGGFDLTPYYPYLEDVVSWHQSAKALCEPFGDETYPKYKKWCDEYFWLPHRNETRGVGGLFFDDLNKQGFDKSFDFMQAVGNGFLTAYAPIVERRKETEYGEHERQFQLYRRGRYVEFNLVYDRGTLFGLQTGGRTESILMSMPPLVRWEYAYIPEAGSPEAALYSDYLKPRDWLSL</sequence>
<reference key="1">
    <citation type="journal article" date="2008" name="PLoS ONE">
        <title>Environmental adaptation: genomic analysis of the piezotolerant and psychrotolerant deep-sea iron reducing bacterium Shewanella piezotolerans WP3.</title>
        <authorList>
            <person name="Wang F."/>
            <person name="Wang J."/>
            <person name="Jian H."/>
            <person name="Zhang B."/>
            <person name="Li S."/>
            <person name="Wang F."/>
            <person name="Zeng X."/>
            <person name="Gao L."/>
            <person name="Bartlett D.H."/>
            <person name="Yu J."/>
            <person name="Hu S."/>
            <person name="Xiao X."/>
        </authorList>
    </citation>
    <scope>NUCLEOTIDE SEQUENCE [LARGE SCALE GENOMIC DNA]</scope>
    <source>
        <strain>WP3 / JCM 13877</strain>
    </source>
</reference>
<dbReference type="EC" id="1.3.3.3" evidence="1"/>
<dbReference type="EMBL" id="CP000472">
    <property type="protein sequence ID" value="ACJ26911.1"/>
    <property type="molecule type" value="Genomic_DNA"/>
</dbReference>
<dbReference type="RefSeq" id="WP_020910295.1">
    <property type="nucleotide sequence ID" value="NC_011566.1"/>
</dbReference>
<dbReference type="SMR" id="B8CHB9"/>
<dbReference type="STRING" id="225849.swp_0064"/>
<dbReference type="KEGG" id="swp:swp_0064"/>
<dbReference type="eggNOG" id="COG0408">
    <property type="taxonomic scope" value="Bacteria"/>
</dbReference>
<dbReference type="HOGENOM" id="CLU_026169_0_1_6"/>
<dbReference type="OrthoDB" id="9777553at2"/>
<dbReference type="UniPathway" id="UPA00251">
    <property type="reaction ID" value="UER00322"/>
</dbReference>
<dbReference type="Proteomes" id="UP000000753">
    <property type="component" value="Chromosome"/>
</dbReference>
<dbReference type="GO" id="GO:0005737">
    <property type="term" value="C:cytoplasm"/>
    <property type="evidence" value="ECO:0007669"/>
    <property type="project" value="UniProtKB-SubCell"/>
</dbReference>
<dbReference type="GO" id="GO:0004109">
    <property type="term" value="F:coproporphyrinogen oxidase activity"/>
    <property type="evidence" value="ECO:0007669"/>
    <property type="project" value="UniProtKB-UniRule"/>
</dbReference>
<dbReference type="GO" id="GO:0046872">
    <property type="term" value="F:metal ion binding"/>
    <property type="evidence" value="ECO:0007669"/>
    <property type="project" value="UniProtKB-KW"/>
</dbReference>
<dbReference type="GO" id="GO:0042803">
    <property type="term" value="F:protein homodimerization activity"/>
    <property type="evidence" value="ECO:0000250"/>
    <property type="project" value="UniProtKB"/>
</dbReference>
<dbReference type="GO" id="GO:0006782">
    <property type="term" value="P:protoporphyrinogen IX biosynthetic process"/>
    <property type="evidence" value="ECO:0007669"/>
    <property type="project" value="UniProtKB-UniRule"/>
</dbReference>
<dbReference type="FunFam" id="3.40.1500.10:FF:000001">
    <property type="entry name" value="Oxygen-dependent coproporphyrinogen-III oxidase"/>
    <property type="match status" value="1"/>
</dbReference>
<dbReference type="Gene3D" id="3.40.1500.10">
    <property type="entry name" value="Coproporphyrinogen III oxidase, aerobic"/>
    <property type="match status" value="1"/>
</dbReference>
<dbReference type="HAMAP" id="MF_00333">
    <property type="entry name" value="Coprogen_oxidas"/>
    <property type="match status" value="1"/>
</dbReference>
<dbReference type="InterPro" id="IPR001260">
    <property type="entry name" value="Coprogen_oxidase_aer"/>
</dbReference>
<dbReference type="InterPro" id="IPR036406">
    <property type="entry name" value="Coprogen_oxidase_aer_sf"/>
</dbReference>
<dbReference type="InterPro" id="IPR018375">
    <property type="entry name" value="Coprogen_oxidase_CS"/>
</dbReference>
<dbReference type="NCBIfam" id="NF003727">
    <property type="entry name" value="PRK05330.1"/>
    <property type="match status" value="1"/>
</dbReference>
<dbReference type="PANTHER" id="PTHR10755">
    <property type="entry name" value="COPROPORPHYRINOGEN III OXIDASE, MITOCHONDRIAL"/>
    <property type="match status" value="1"/>
</dbReference>
<dbReference type="PANTHER" id="PTHR10755:SF0">
    <property type="entry name" value="OXYGEN-DEPENDENT COPROPORPHYRINOGEN-III OXIDASE, MITOCHONDRIAL"/>
    <property type="match status" value="1"/>
</dbReference>
<dbReference type="Pfam" id="PF01218">
    <property type="entry name" value="Coprogen_oxidas"/>
    <property type="match status" value="1"/>
</dbReference>
<dbReference type="PIRSF" id="PIRSF000166">
    <property type="entry name" value="Coproporphyri_ox"/>
    <property type="match status" value="1"/>
</dbReference>
<dbReference type="PRINTS" id="PR00073">
    <property type="entry name" value="COPRGNOXDASE"/>
</dbReference>
<dbReference type="SUPFAM" id="SSF102886">
    <property type="entry name" value="Coproporphyrinogen III oxidase"/>
    <property type="match status" value="1"/>
</dbReference>
<dbReference type="PROSITE" id="PS01021">
    <property type="entry name" value="COPROGEN_OXIDASE"/>
    <property type="match status" value="1"/>
</dbReference>
<gene>
    <name evidence="1" type="primary">hemF</name>
    <name type="ordered locus">swp_0064</name>
</gene>
<evidence type="ECO:0000255" key="1">
    <source>
        <dbReference type="HAMAP-Rule" id="MF_00333"/>
    </source>
</evidence>
<name>HEM6_SHEPW</name>